<accession>Q1GB06</accession>
<keyword id="KW-1003">Cell membrane</keyword>
<keyword id="KW-0407">Ion channel</keyword>
<keyword id="KW-0406">Ion transport</keyword>
<keyword id="KW-0472">Membrane</keyword>
<keyword id="KW-0479">Metal-binding</keyword>
<keyword id="KW-1185">Reference proteome</keyword>
<keyword id="KW-0915">Sodium</keyword>
<keyword id="KW-0812">Transmembrane</keyword>
<keyword id="KW-1133">Transmembrane helix</keyword>
<keyword id="KW-0813">Transport</keyword>
<organism>
    <name type="scientific">Lactobacillus delbrueckii subsp. bulgaricus (strain ATCC 11842 / DSM 20081 / BCRC 10696 / JCM 1002 / NBRC 13953 / NCIMB 11778 / NCTC 12712 / WDCM 00102 / Lb 14)</name>
    <dbReference type="NCBI Taxonomy" id="390333"/>
    <lineage>
        <taxon>Bacteria</taxon>
        <taxon>Bacillati</taxon>
        <taxon>Bacillota</taxon>
        <taxon>Bacilli</taxon>
        <taxon>Lactobacillales</taxon>
        <taxon>Lactobacillaceae</taxon>
        <taxon>Lactobacillus</taxon>
    </lineage>
</organism>
<name>FLUC2_LACDA</name>
<evidence type="ECO:0000255" key="1">
    <source>
        <dbReference type="HAMAP-Rule" id="MF_00454"/>
    </source>
</evidence>
<comment type="function">
    <text evidence="1">Fluoride-specific ion channel. Important for reducing fluoride concentration in the cell, thus reducing its toxicity.</text>
</comment>
<comment type="catalytic activity">
    <reaction evidence="1">
        <text>fluoride(in) = fluoride(out)</text>
        <dbReference type="Rhea" id="RHEA:76159"/>
        <dbReference type="ChEBI" id="CHEBI:17051"/>
    </reaction>
    <physiologicalReaction direction="left-to-right" evidence="1">
        <dbReference type="Rhea" id="RHEA:76160"/>
    </physiologicalReaction>
</comment>
<comment type="activity regulation">
    <text evidence="1">Na(+) is not transported, but it plays an essential structural role and its presence is essential for fluoride channel function.</text>
</comment>
<comment type="subcellular location">
    <subcellularLocation>
        <location evidence="1">Cell membrane</location>
        <topology evidence="1">Multi-pass membrane protein</topology>
    </subcellularLocation>
</comment>
<comment type="similarity">
    <text evidence="1">Belongs to the fluoride channel Fluc/FEX (TC 1.A.43) family.</text>
</comment>
<proteinExistence type="inferred from homology"/>
<gene>
    <name evidence="1" type="primary">fluC2</name>
    <name evidence="1" type="synonym">crcB2</name>
    <name type="ordered locus">Ldb0662</name>
</gene>
<protein>
    <recommendedName>
        <fullName evidence="1">Fluoride-specific ion channel FluC 2</fullName>
    </recommendedName>
</protein>
<dbReference type="EMBL" id="CR954253">
    <property type="protein sequence ID" value="CAI97491.1"/>
    <property type="molecule type" value="Genomic_DNA"/>
</dbReference>
<dbReference type="SMR" id="Q1GB06"/>
<dbReference type="STRING" id="390333.Ldb0662"/>
<dbReference type="KEGG" id="ldb:Ldb0662"/>
<dbReference type="PATRIC" id="fig|390333.13.peg.137"/>
<dbReference type="eggNOG" id="COG0239">
    <property type="taxonomic scope" value="Bacteria"/>
</dbReference>
<dbReference type="HOGENOM" id="CLU_114342_2_3_9"/>
<dbReference type="BioCyc" id="LDEL390333:LDB_RS02865-MONOMER"/>
<dbReference type="Proteomes" id="UP000001259">
    <property type="component" value="Chromosome"/>
</dbReference>
<dbReference type="GO" id="GO:0005886">
    <property type="term" value="C:plasma membrane"/>
    <property type="evidence" value="ECO:0007669"/>
    <property type="project" value="UniProtKB-SubCell"/>
</dbReference>
<dbReference type="GO" id="GO:0062054">
    <property type="term" value="F:fluoride channel activity"/>
    <property type="evidence" value="ECO:0007669"/>
    <property type="project" value="UniProtKB-UniRule"/>
</dbReference>
<dbReference type="GO" id="GO:0046872">
    <property type="term" value="F:metal ion binding"/>
    <property type="evidence" value="ECO:0007669"/>
    <property type="project" value="UniProtKB-KW"/>
</dbReference>
<dbReference type="GO" id="GO:0140114">
    <property type="term" value="P:cellular detoxification of fluoride"/>
    <property type="evidence" value="ECO:0007669"/>
    <property type="project" value="UniProtKB-UniRule"/>
</dbReference>
<dbReference type="HAMAP" id="MF_00454">
    <property type="entry name" value="FluC"/>
    <property type="match status" value="1"/>
</dbReference>
<dbReference type="InterPro" id="IPR003691">
    <property type="entry name" value="FluC"/>
</dbReference>
<dbReference type="NCBIfam" id="NF010816">
    <property type="entry name" value="PRK14220.1"/>
    <property type="match status" value="1"/>
</dbReference>
<dbReference type="Pfam" id="PF02537">
    <property type="entry name" value="CRCB"/>
    <property type="match status" value="1"/>
</dbReference>
<sequence>MIFAVGFGASLGAVARYALTSYGKKHWMQGTACPRPTLLINLTGAFFLGLAFALRLPASVYAFLGTGVLGGYTTFSTLNTEMVSLAENGQKHVLKHYLLASYLGGAVLLTCGYYLGSLL</sequence>
<feature type="chain" id="PRO_0000252891" description="Fluoride-specific ion channel FluC 2">
    <location>
        <begin position="1"/>
        <end position="119"/>
    </location>
</feature>
<feature type="transmembrane region" description="Helical" evidence="1">
    <location>
        <begin position="1"/>
        <end position="21"/>
    </location>
</feature>
<feature type="transmembrane region" description="Helical" evidence="1">
    <location>
        <begin position="44"/>
        <end position="64"/>
    </location>
</feature>
<feature type="transmembrane region" description="Helical" evidence="1">
    <location>
        <begin position="98"/>
        <end position="118"/>
    </location>
</feature>
<feature type="binding site" evidence="1">
    <location>
        <position position="70"/>
    </location>
    <ligand>
        <name>Na(+)</name>
        <dbReference type="ChEBI" id="CHEBI:29101"/>
        <note>structural</note>
    </ligand>
</feature>
<feature type="binding site" evidence="1">
    <location>
        <position position="73"/>
    </location>
    <ligand>
        <name>Na(+)</name>
        <dbReference type="ChEBI" id="CHEBI:29101"/>
        <note>structural</note>
    </ligand>
</feature>
<reference key="1">
    <citation type="journal article" date="2006" name="Proc. Natl. Acad. Sci. U.S.A.">
        <title>The complete genome sequence of Lactobacillus bulgaricus reveals extensive and ongoing reductive evolution.</title>
        <authorList>
            <person name="van de Guchte M."/>
            <person name="Penaud S."/>
            <person name="Grimaldi C."/>
            <person name="Barbe V."/>
            <person name="Bryson K."/>
            <person name="Nicolas P."/>
            <person name="Robert C."/>
            <person name="Oztas S."/>
            <person name="Mangenot S."/>
            <person name="Couloux A."/>
            <person name="Loux V."/>
            <person name="Dervyn R."/>
            <person name="Bossy R."/>
            <person name="Bolotin A."/>
            <person name="Batto J.-M."/>
            <person name="Walunas T."/>
            <person name="Gibrat J.-F."/>
            <person name="Bessieres P."/>
            <person name="Weissenbach J."/>
            <person name="Ehrlich S.D."/>
            <person name="Maguin E."/>
        </authorList>
    </citation>
    <scope>NUCLEOTIDE SEQUENCE [LARGE SCALE GENOMIC DNA]</scope>
    <source>
        <strain>ATCC 11842 / DSM 20081 / BCRC 10696 / JCM 1002 / NBRC 13953 / NCIMB 11778 / NCTC 12712 / WDCM 00102 / Lb 14</strain>
    </source>
</reference>